<comment type="function">
    <text evidence="1">Catalyzes the last two steps in the biosynthesis of 5-methylaminomethyl-2-thiouridine (mnm(5)s(2)U) at the wobble position (U34) in tRNA. Catalyzes the FAD-dependent demodification of cmnm(5)s(2)U34 to nm(5)s(2)U34, followed by the transfer of a methyl group from S-adenosyl-L-methionine to nm(5)s(2)U34, to form mnm(5)s(2)U34.</text>
</comment>
<comment type="catalytic activity">
    <reaction evidence="1">
        <text>5-aminomethyl-2-thiouridine(34) in tRNA + S-adenosyl-L-methionine = 5-methylaminomethyl-2-thiouridine(34) in tRNA + S-adenosyl-L-homocysteine + H(+)</text>
        <dbReference type="Rhea" id="RHEA:19569"/>
        <dbReference type="Rhea" id="RHEA-COMP:10195"/>
        <dbReference type="Rhea" id="RHEA-COMP:10197"/>
        <dbReference type="ChEBI" id="CHEBI:15378"/>
        <dbReference type="ChEBI" id="CHEBI:57856"/>
        <dbReference type="ChEBI" id="CHEBI:59789"/>
        <dbReference type="ChEBI" id="CHEBI:74454"/>
        <dbReference type="ChEBI" id="CHEBI:74455"/>
        <dbReference type="EC" id="2.1.1.61"/>
    </reaction>
</comment>
<comment type="cofactor">
    <cofactor evidence="1">
        <name>FAD</name>
        <dbReference type="ChEBI" id="CHEBI:57692"/>
    </cofactor>
</comment>
<comment type="subcellular location">
    <subcellularLocation>
        <location evidence="1">Cytoplasm</location>
    </subcellularLocation>
</comment>
<comment type="similarity">
    <text evidence="1">In the N-terminal section; belongs to the methyltransferase superfamily. tRNA (mnm(5)s(2)U34)-methyltransferase family.</text>
</comment>
<comment type="similarity">
    <text evidence="1">In the C-terminal section; belongs to the DAO family.</text>
</comment>
<comment type="sequence caution" evidence="2">
    <conflict type="erroneous initiation">
        <sequence resource="EMBL-CDS" id="ABN92507"/>
    </conflict>
</comment>
<keyword id="KW-0963">Cytoplasm</keyword>
<keyword id="KW-0274">FAD</keyword>
<keyword id="KW-0285">Flavoprotein</keyword>
<keyword id="KW-0489">Methyltransferase</keyword>
<keyword id="KW-0511">Multifunctional enzyme</keyword>
<keyword id="KW-0560">Oxidoreductase</keyword>
<keyword id="KW-0949">S-adenosyl-L-methionine</keyword>
<keyword id="KW-0808">Transferase</keyword>
<keyword id="KW-0819">tRNA processing</keyword>
<gene>
    <name evidence="1" type="primary">mnmC</name>
    <name type="ordered locus">BURPS1106A_0003</name>
</gene>
<proteinExistence type="inferred from homology"/>
<name>MNMC_BURP0</name>
<protein>
    <recommendedName>
        <fullName evidence="1">tRNA 5-methylaminomethyl-2-thiouridine biosynthesis bifunctional protein MnmC</fullName>
        <shortName evidence="1">tRNA mnm(5)s(2)U biosynthesis bifunctional protein</shortName>
    </recommendedName>
    <domain>
        <recommendedName>
            <fullName evidence="1">tRNA (mnm(5)s(2)U34)-methyltransferase</fullName>
            <ecNumber evidence="1">2.1.1.61</ecNumber>
        </recommendedName>
    </domain>
    <domain>
        <recommendedName>
            <fullName evidence="1">FAD-dependent cmnm(5)s(2)U34 oxidoreductase</fullName>
            <ecNumber evidence="1">1.5.-.-</ecNumber>
        </recommendedName>
    </domain>
</protein>
<feature type="chain" id="PRO_0000347960" description="tRNA 5-methylaminomethyl-2-thiouridine biosynthesis bifunctional protein MnmC">
    <location>
        <begin position="1"/>
        <end position="660"/>
    </location>
</feature>
<feature type="region of interest" description="tRNA (mnm(5)s(2)U34)-methyltransferase">
    <location>
        <begin position="1"/>
        <end position="242"/>
    </location>
</feature>
<feature type="region of interest" description="FAD-dependent cmnm(5)s(2)U34 oxidoreductase">
    <location>
        <begin position="266"/>
        <end position="660"/>
    </location>
</feature>
<accession>A3NPL7</accession>
<reference key="1">
    <citation type="journal article" date="2010" name="Genome Biol. Evol.">
        <title>Continuing evolution of Burkholderia mallei through genome reduction and large-scale rearrangements.</title>
        <authorList>
            <person name="Losada L."/>
            <person name="Ronning C.M."/>
            <person name="DeShazer D."/>
            <person name="Woods D."/>
            <person name="Fedorova N."/>
            <person name="Kim H.S."/>
            <person name="Shabalina S.A."/>
            <person name="Pearson T.R."/>
            <person name="Brinkac L."/>
            <person name="Tan P."/>
            <person name="Nandi T."/>
            <person name="Crabtree J."/>
            <person name="Badger J."/>
            <person name="Beckstrom-Sternberg S."/>
            <person name="Saqib M."/>
            <person name="Schutzer S.E."/>
            <person name="Keim P."/>
            <person name="Nierman W.C."/>
        </authorList>
    </citation>
    <scope>NUCLEOTIDE SEQUENCE [LARGE SCALE GENOMIC DNA]</scope>
    <source>
        <strain>1106a</strain>
    </source>
</reference>
<dbReference type="EC" id="2.1.1.61" evidence="1"/>
<dbReference type="EC" id="1.5.-.-" evidence="1"/>
<dbReference type="EMBL" id="CP000572">
    <property type="protein sequence ID" value="ABN92507.1"/>
    <property type="status" value="ALT_INIT"/>
    <property type="molecule type" value="Genomic_DNA"/>
</dbReference>
<dbReference type="RefSeq" id="WP_038716765.1">
    <property type="nucleotide sequence ID" value="NC_009076.1"/>
</dbReference>
<dbReference type="SMR" id="A3NPL7"/>
<dbReference type="GeneID" id="93058510"/>
<dbReference type="KEGG" id="bpl:BURPS1106A_0003"/>
<dbReference type="HOGENOM" id="CLU_022427_1_0_4"/>
<dbReference type="Proteomes" id="UP000006738">
    <property type="component" value="Chromosome I"/>
</dbReference>
<dbReference type="GO" id="GO:0005737">
    <property type="term" value="C:cytoplasm"/>
    <property type="evidence" value="ECO:0007669"/>
    <property type="project" value="UniProtKB-SubCell"/>
</dbReference>
<dbReference type="GO" id="GO:0050660">
    <property type="term" value="F:flavin adenine dinucleotide binding"/>
    <property type="evidence" value="ECO:0007669"/>
    <property type="project" value="UniProtKB-UniRule"/>
</dbReference>
<dbReference type="GO" id="GO:0016645">
    <property type="term" value="F:oxidoreductase activity, acting on the CH-NH group of donors"/>
    <property type="evidence" value="ECO:0007669"/>
    <property type="project" value="InterPro"/>
</dbReference>
<dbReference type="GO" id="GO:0004808">
    <property type="term" value="F:tRNA (5-methylaminomethyl-2-thiouridylate)(34)-methyltransferase activity"/>
    <property type="evidence" value="ECO:0007669"/>
    <property type="project" value="UniProtKB-EC"/>
</dbReference>
<dbReference type="GO" id="GO:0032259">
    <property type="term" value="P:methylation"/>
    <property type="evidence" value="ECO:0007669"/>
    <property type="project" value="UniProtKB-KW"/>
</dbReference>
<dbReference type="GO" id="GO:0002097">
    <property type="term" value="P:tRNA wobble base modification"/>
    <property type="evidence" value="ECO:0007669"/>
    <property type="project" value="UniProtKB-UniRule"/>
</dbReference>
<dbReference type="Gene3D" id="3.30.9.10">
    <property type="entry name" value="D-Amino Acid Oxidase, subunit A, domain 2"/>
    <property type="match status" value="1"/>
</dbReference>
<dbReference type="Gene3D" id="3.50.50.60">
    <property type="entry name" value="FAD/NAD(P)-binding domain"/>
    <property type="match status" value="1"/>
</dbReference>
<dbReference type="Gene3D" id="3.40.50.150">
    <property type="entry name" value="Vaccinia Virus protein VP39"/>
    <property type="match status" value="1"/>
</dbReference>
<dbReference type="HAMAP" id="MF_01102">
    <property type="entry name" value="MnmC"/>
    <property type="match status" value="1"/>
</dbReference>
<dbReference type="InterPro" id="IPR006076">
    <property type="entry name" value="FAD-dep_OxRdtase"/>
</dbReference>
<dbReference type="InterPro" id="IPR036188">
    <property type="entry name" value="FAD/NAD-bd_sf"/>
</dbReference>
<dbReference type="InterPro" id="IPR008471">
    <property type="entry name" value="MnmC-like_methylTransf"/>
</dbReference>
<dbReference type="InterPro" id="IPR029063">
    <property type="entry name" value="SAM-dependent_MTases_sf"/>
</dbReference>
<dbReference type="InterPro" id="IPR023032">
    <property type="entry name" value="tRNA_MAMT_biosynth_bifunc_MnmC"/>
</dbReference>
<dbReference type="InterPro" id="IPR047785">
    <property type="entry name" value="tRNA_MNMC2"/>
</dbReference>
<dbReference type="InterPro" id="IPR017610">
    <property type="entry name" value="tRNA_S-uridine_synth_MnmC_C"/>
</dbReference>
<dbReference type="NCBIfam" id="TIGR03197">
    <property type="entry name" value="MnmC_Cterm"/>
    <property type="match status" value="1"/>
</dbReference>
<dbReference type="NCBIfam" id="NF002481">
    <property type="entry name" value="PRK01747.1-2"/>
    <property type="match status" value="1"/>
</dbReference>
<dbReference type="NCBIfam" id="NF002483">
    <property type="entry name" value="PRK01747.1-4"/>
    <property type="match status" value="1"/>
</dbReference>
<dbReference type="NCBIfam" id="NF033855">
    <property type="entry name" value="tRNA_MNMC2"/>
    <property type="match status" value="1"/>
</dbReference>
<dbReference type="PANTHER" id="PTHR13847">
    <property type="entry name" value="SARCOSINE DEHYDROGENASE-RELATED"/>
    <property type="match status" value="1"/>
</dbReference>
<dbReference type="PANTHER" id="PTHR13847:SF283">
    <property type="entry name" value="TRNA 5-METHYLAMINOMETHYL-2-THIOURIDINE BIOSYNTHESIS BIFUNCTIONAL PROTEIN MNMC"/>
    <property type="match status" value="1"/>
</dbReference>
<dbReference type="Pfam" id="PF01266">
    <property type="entry name" value="DAO"/>
    <property type="match status" value="1"/>
</dbReference>
<dbReference type="Pfam" id="PF05430">
    <property type="entry name" value="Methyltransf_30"/>
    <property type="match status" value="1"/>
</dbReference>
<dbReference type="SUPFAM" id="SSF54373">
    <property type="entry name" value="FAD-linked reductases, C-terminal domain"/>
    <property type="match status" value="1"/>
</dbReference>
<dbReference type="SUPFAM" id="SSF51905">
    <property type="entry name" value="FAD/NAD(P)-binding domain"/>
    <property type="match status" value="1"/>
</dbReference>
<sequence>MTDRIVPATLVFREDGTVVSPLYGDIYHSAAGALAQADHVFIRGNGLPERWRHERAFTIIETGFGTGCNFLATWAAWRADPSHCERLHFVSVEKHPFAREDLRRAAAHIVAYTTITTITPIAPLVDELANAWPALTPGVHRLEFDDGRVTLTLVFGDALDVLPNLALRAHAFYLDGFAPSKNADLWSPAIFKSLAKLADERATFATYTSSGAVKRALDEAGFAYRKVDGFAGKRAMLVGEFAPRWRVRRHEPPRAFSTDRRDAIVIGAGLAGCAVVERLAARGWHVTLIERRERIASEASGNPAGVFHPMIARDDNLAARLSRAGFLHALHRWRALERAGHAFSRSTHGLVQLATSDDEFERMRESIDALGVPAELASALSRDDARALLRTDVAHGGWLFAQGGSISPAALAAAQCAAAGDRLSRIVGVEIARLERGGDGRWRALDASGATIAQASVVVVANAADAARIAGLRHAPTQRVRGQLTLLPPGSAPAVPLPVIGDGYVVPLANGVTLTGATYEPDDTDATPREAGHRENLERLERLLPAFSANALDAGALAGRVGFRCVASDRLPLVGELGDEAAAAREAAALTGARLRDVPRATGLYGAFGYGSRGLVWAALGAELIAAQIDGEPWPLERELAEAIDPARFLVRALRHGRVA</sequence>
<evidence type="ECO:0000255" key="1">
    <source>
        <dbReference type="HAMAP-Rule" id="MF_01102"/>
    </source>
</evidence>
<evidence type="ECO:0000305" key="2"/>
<organism>
    <name type="scientific">Burkholderia pseudomallei (strain 1106a)</name>
    <dbReference type="NCBI Taxonomy" id="357348"/>
    <lineage>
        <taxon>Bacteria</taxon>
        <taxon>Pseudomonadati</taxon>
        <taxon>Pseudomonadota</taxon>
        <taxon>Betaproteobacteria</taxon>
        <taxon>Burkholderiales</taxon>
        <taxon>Burkholderiaceae</taxon>
        <taxon>Burkholderia</taxon>
        <taxon>pseudomallei group</taxon>
    </lineage>
</organism>